<keyword id="KW-0963">Cytoplasm</keyword>
<keyword id="KW-0489">Methyltransferase</keyword>
<keyword id="KW-0694">RNA-binding</keyword>
<keyword id="KW-0698">rRNA processing</keyword>
<keyword id="KW-0949">S-adenosyl-L-methionine</keyword>
<keyword id="KW-0808">Transferase</keyword>
<gene>
    <name evidence="1" type="primary">rsmF</name>
    <name type="ordered locus">swp_2828</name>
</gene>
<comment type="function">
    <text evidence="1">Specifically methylates the cytosine at position 1407 (m5C1407) of 16S rRNA.</text>
</comment>
<comment type="catalytic activity">
    <reaction evidence="1">
        <text>cytidine(1407) in 16S rRNA + S-adenosyl-L-methionine = 5-methylcytidine(1407) in 16S rRNA + S-adenosyl-L-homocysteine + H(+)</text>
        <dbReference type="Rhea" id="RHEA:42756"/>
        <dbReference type="Rhea" id="RHEA-COMP:10223"/>
        <dbReference type="Rhea" id="RHEA-COMP:10224"/>
        <dbReference type="ChEBI" id="CHEBI:15378"/>
        <dbReference type="ChEBI" id="CHEBI:57856"/>
        <dbReference type="ChEBI" id="CHEBI:59789"/>
        <dbReference type="ChEBI" id="CHEBI:74483"/>
        <dbReference type="ChEBI" id="CHEBI:82748"/>
        <dbReference type="EC" id="2.1.1.178"/>
    </reaction>
</comment>
<comment type="subcellular location">
    <subcellularLocation>
        <location evidence="1">Cytoplasm</location>
    </subcellularLocation>
</comment>
<comment type="similarity">
    <text evidence="1">Belongs to the class I-like SAM-binding methyltransferase superfamily. RsmB/NOP family.</text>
</comment>
<comment type="sequence caution" evidence="2">
    <conflict type="erroneous initiation">
        <sequence resource="EMBL-CDS" id="ACJ29554"/>
    </conflict>
</comment>
<reference key="1">
    <citation type="journal article" date="2008" name="PLoS ONE">
        <title>Environmental adaptation: genomic analysis of the piezotolerant and psychrotolerant deep-sea iron reducing bacterium Shewanella piezotolerans WP3.</title>
        <authorList>
            <person name="Wang F."/>
            <person name="Wang J."/>
            <person name="Jian H."/>
            <person name="Zhang B."/>
            <person name="Li S."/>
            <person name="Wang F."/>
            <person name="Zeng X."/>
            <person name="Gao L."/>
            <person name="Bartlett D.H."/>
            <person name="Yu J."/>
            <person name="Hu S."/>
            <person name="Xiao X."/>
        </authorList>
    </citation>
    <scope>NUCLEOTIDE SEQUENCE [LARGE SCALE GENOMIC DNA]</scope>
    <source>
        <strain>WP3 / JCM 13877</strain>
    </source>
</reference>
<evidence type="ECO:0000255" key="1">
    <source>
        <dbReference type="HAMAP-Rule" id="MF_01579"/>
    </source>
</evidence>
<evidence type="ECO:0000305" key="2"/>
<accession>B8CPH7</accession>
<sequence>MAHFNQNFINSIKQDLPSHLCMEDFISYSSKPLRPSIRVNTLKISSKNFIKLMTPKGWHFDPIPWCENGYWIKLDQEVQLGNTIEHLQGLFYIQEASSMLPPTALLSVEQHDAQQYVLDMASAPGSKTTQIAALMGNKGLLVANEYSASRVKVLHANIARMGVANCALTHFDARVFGEYMFEIFDSVLLDAPCSGEGTIRKDPDALKNWDNNDVKGIVDTQKALIDSAFQSLKAGGELVYSTCALSRQENQNVCDYLKQRYPDAVEFINLSSLFPGADKSCTEEGFLHVWPQIYDSEGFFVAKIKKVSSIERVLPEPKKQKNFPFEKASAKKIAEIVEYLKTSFGIVLPSENGIYVRDAEVWLFPEDFHKLIGKMRFQRIGMKLADVLKKGFKVKHEAVLALTSPNTIELTDDEAQVFLMGRDITLSEKVKPQGETIVSYAGVSLGVVKHLGNKLKNNLPRDLVKDKIARYEQS</sequence>
<dbReference type="EC" id="2.1.1.178" evidence="1"/>
<dbReference type="EMBL" id="CP000472">
    <property type="protein sequence ID" value="ACJ29554.1"/>
    <property type="status" value="ALT_INIT"/>
    <property type="molecule type" value="Genomic_DNA"/>
</dbReference>
<dbReference type="RefSeq" id="WP_044556428.1">
    <property type="nucleotide sequence ID" value="NC_011566.1"/>
</dbReference>
<dbReference type="SMR" id="B8CPH7"/>
<dbReference type="STRING" id="225849.swp_2828"/>
<dbReference type="KEGG" id="swp:swp_2828"/>
<dbReference type="eggNOG" id="COG0144">
    <property type="taxonomic scope" value="Bacteria"/>
</dbReference>
<dbReference type="eggNOG" id="COG3270">
    <property type="taxonomic scope" value="Bacteria"/>
</dbReference>
<dbReference type="HOGENOM" id="CLU_005316_6_2_6"/>
<dbReference type="OrthoDB" id="9810297at2"/>
<dbReference type="Proteomes" id="UP000000753">
    <property type="component" value="Chromosome"/>
</dbReference>
<dbReference type="GO" id="GO:0005737">
    <property type="term" value="C:cytoplasm"/>
    <property type="evidence" value="ECO:0007669"/>
    <property type="project" value="UniProtKB-SubCell"/>
</dbReference>
<dbReference type="GO" id="GO:0003723">
    <property type="term" value="F:RNA binding"/>
    <property type="evidence" value="ECO:0007669"/>
    <property type="project" value="UniProtKB-KW"/>
</dbReference>
<dbReference type="GO" id="GO:0009383">
    <property type="term" value="F:rRNA (cytosine-C5-)-methyltransferase activity"/>
    <property type="evidence" value="ECO:0007669"/>
    <property type="project" value="TreeGrafter"/>
</dbReference>
<dbReference type="GO" id="GO:0070475">
    <property type="term" value="P:rRNA base methylation"/>
    <property type="evidence" value="ECO:0007669"/>
    <property type="project" value="TreeGrafter"/>
</dbReference>
<dbReference type="CDD" id="cd02440">
    <property type="entry name" value="AdoMet_MTases"/>
    <property type="match status" value="1"/>
</dbReference>
<dbReference type="Gene3D" id="3.10.450.720">
    <property type="match status" value="1"/>
</dbReference>
<dbReference type="Gene3D" id="3.40.50.150">
    <property type="entry name" value="Vaccinia Virus protein VP39"/>
    <property type="match status" value="1"/>
</dbReference>
<dbReference type="HAMAP" id="MF_01579">
    <property type="entry name" value="16SrRNA_methyltr_F"/>
    <property type="match status" value="1"/>
</dbReference>
<dbReference type="InterPro" id="IPR031341">
    <property type="entry name" value="Methyltr_RsmF_N"/>
</dbReference>
<dbReference type="InterPro" id="IPR049560">
    <property type="entry name" value="MeTrfase_RsmB-F_NOP2_cat"/>
</dbReference>
<dbReference type="InterPro" id="IPR001678">
    <property type="entry name" value="MeTrfase_RsmB-F_NOP2_dom"/>
</dbReference>
<dbReference type="InterPro" id="IPR027391">
    <property type="entry name" value="Nol1_Nop2_Fmu_2"/>
</dbReference>
<dbReference type="InterPro" id="IPR011023">
    <property type="entry name" value="Nop2p"/>
</dbReference>
<dbReference type="InterPro" id="IPR023267">
    <property type="entry name" value="RCMT"/>
</dbReference>
<dbReference type="InterPro" id="IPR023545">
    <property type="entry name" value="rRNA_ssu_MeTfrase_F"/>
</dbReference>
<dbReference type="InterPro" id="IPR029063">
    <property type="entry name" value="SAM-dependent_MTases_sf"/>
</dbReference>
<dbReference type="InterPro" id="IPR048457">
    <property type="entry name" value="YebU_pre-PUA_dom"/>
</dbReference>
<dbReference type="NCBIfam" id="TIGR00446">
    <property type="entry name" value="nop2p"/>
    <property type="match status" value="1"/>
</dbReference>
<dbReference type="NCBIfam" id="NF008898">
    <property type="entry name" value="PRK11933.1"/>
    <property type="match status" value="1"/>
</dbReference>
<dbReference type="PANTHER" id="PTHR22807:SF30">
    <property type="entry name" value="28S RRNA (CYTOSINE(4447)-C(5))-METHYLTRANSFERASE-RELATED"/>
    <property type="match status" value="1"/>
</dbReference>
<dbReference type="PANTHER" id="PTHR22807">
    <property type="entry name" value="NOP2 YEAST -RELATED NOL1/NOP2/FMU SUN DOMAIN-CONTAINING"/>
    <property type="match status" value="1"/>
</dbReference>
<dbReference type="Pfam" id="PF01189">
    <property type="entry name" value="Methyltr_RsmB-F"/>
    <property type="match status" value="1"/>
</dbReference>
<dbReference type="Pfam" id="PF17125">
    <property type="entry name" value="Methyltr_RsmF_N"/>
    <property type="match status" value="1"/>
</dbReference>
<dbReference type="Pfam" id="PF13636">
    <property type="entry name" value="Methyltranf_PUA"/>
    <property type="match status" value="1"/>
</dbReference>
<dbReference type="Pfam" id="PF21150">
    <property type="entry name" value="YebU_pre-PUA_dom"/>
    <property type="match status" value="1"/>
</dbReference>
<dbReference type="PRINTS" id="PR02008">
    <property type="entry name" value="RCMTFAMILY"/>
</dbReference>
<dbReference type="SUPFAM" id="SSF53335">
    <property type="entry name" value="S-adenosyl-L-methionine-dependent methyltransferases"/>
    <property type="match status" value="1"/>
</dbReference>
<dbReference type="PROSITE" id="PS51686">
    <property type="entry name" value="SAM_MT_RSMB_NOP"/>
    <property type="match status" value="1"/>
</dbReference>
<organism>
    <name type="scientific">Shewanella piezotolerans (strain WP3 / JCM 13877)</name>
    <dbReference type="NCBI Taxonomy" id="225849"/>
    <lineage>
        <taxon>Bacteria</taxon>
        <taxon>Pseudomonadati</taxon>
        <taxon>Pseudomonadota</taxon>
        <taxon>Gammaproteobacteria</taxon>
        <taxon>Alteromonadales</taxon>
        <taxon>Shewanellaceae</taxon>
        <taxon>Shewanella</taxon>
    </lineage>
</organism>
<protein>
    <recommendedName>
        <fullName evidence="1">Ribosomal RNA small subunit methyltransferase F</fullName>
        <ecNumber evidence="1">2.1.1.178</ecNumber>
    </recommendedName>
    <alternativeName>
        <fullName evidence="1">16S rRNA m5C1407 methyltransferase</fullName>
    </alternativeName>
    <alternativeName>
        <fullName evidence="1">rRNA (cytosine-C(5)-)-methyltransferase RsmF</fullName>
    </alternativeName>
</protein>
<proteinExistence type="inferred from homology"/>
<feature type="chain" id="PRO_0000382588" description="Ribosomal RNA small subunit methyltransferase F">
    <location>
        <begin position="1"/>
        <end position="474"/>
    </location>
</feature>
<feature type="active site" description="Nucleophile" evidence="1">
    <location>
        <position position="243"/>
    </location>
</feature>
<feature type="binding site" evidence="1">
    <location>
        <begin position="121"/>
        <end position="127"/>
    </location>
    <ligand>
        <name>S-adenosyl-L-methionine</name>
        <dbReference type="ChEBI" id="CHEBI:59789"/>
    </ligand>
</feature>
<feature type="binding site" evidence="1">
    <location>
        <position position="145"/>
    </location>
    <ligand>
        <name>S-adenosyl-L-methionine</name>
        <dbReference type="ChEBI" id="CHEBI:59789"/>
    </ligand>
</feature>
<feature type="binding site" evidence="1">
    <location>
        <position position="172"/>
    </location>
    <ligand>
        <name>S-adenosyl-L-methionine</name>
        <dbReference type="ChEBI" id="CHEBI:59789"/>
    </ligand>
</feature>
<feature type="binding site" evidence="1">
    <location>
        <position position="190"/>
    </location>
    <ligand>
        <name>S-adenosyl-L-methionine</name>
        <dbReference type="ChEBI" id="CHEBI:59789"/>
    </ligand>
</feature>
<name>RSMF_SHEPW</name>